<reference key="1">
    <citation type="journal article" date="1988" name="J. Mol. Biol.">
        <title>Nucleotide sequence of pig plasma gelsolin. Comparison of protein sequence with human gelsolin and other actin-severing proteins shows strong homologies and evidence for large internal repeats.</title>
        <authorList>
            <person name="Way M."/>
            <person name="Weeds A.G."/>
        </authorList>
    </citation>
    <scope>NUCLEOTIDE SEQUENCE [MRNA]</scope>
    <scope>ALTERNATIVE INITIATION</scope>
</reference>
<reference key="2">
    <citation type="journal article" date="1986" name="Eur. J. Biochem.">
        <title>Preparation and characterization of pig plasma and platelet gelsolins.</title>
        <authorList>
            <person name="Weeds A.G."/>
            <person name="Gooch J."/>
            <person name="Pope B."/>
            <person name="Harris H.E."/>
        </authorList>
    </citation>
    <scope>PROTEIN SEQUENCE OF 34-72</scope>
</reference>
<organism>
    <name type="scientific">Sus scrofa</name>
    <name type="common">Pig</name>
    <dbReference type="NCBI Taxonomy" id="9823"/>
    <lineage>
        <taxon>Eukaryota</taxon>
        <taxon>Metazoa</taxon>
        <taxon>Chordata</taxon>
        <taxon>Craniata</taxon>
        <taxon>Vertebrata</taxon>
        <taxon>Euteleostomi</taxon>
        <taxon>Mammalia</taxon>
        <taxon>Eutheria</taxon>
        <taxon>Laurasiatheria</taxon>
        <taxon>Artiodactyla</taxon>
        <taxon>Suina</taxon>
        <taxon>Suidae</taxon>
        <taxon>Sus</taxon>
    </lineage>
</organism>
<keyword id="KW-0007">Acetylation</keyword>
<keyword id="KW-0117">Actin capping</keyword>
<keyword id="KW-0009">Actin-binding</keyword>
<keyword id="KW-0024">Alternative initiation</keyword>
<keyword id="KW-0106">Calcium</keyword>
<keyword id="KW-0970">Cilium biogenesis/degradation</keyword>
<keyword id="KW-0963">Cytoplasm</keyword>
<keyword id="KW-0206">Cytoskeleton</keyword>
<keyword id="KW-0903">Direct protein sequencing</keyword>
<keyword id="KW-1015">Disulfide bond</keyword>
<keyword id="KW-0479">Metal-binding</keyword>
<keyword id="KW-0597">Phosphoprotein</keyword>
<keyword id="KW-1185">Reference proteome</keyword>
<keyword id="KW-0677">Repeat</keyword>
<keyword id="KW-0964">Secreted</keyword>
<keyword id="KW-0732">Signal</keyword>
<dbReference type="EMBL" id="M36927">
    <property type="protein sequence ID" value="AAA31042.1"/>
    <property type="molecule type" value="mRNA"/>
</dbReference>
<dbReference type="EMBL" id="X13871">
    <property type="protein sequence ID" value="CAA32077.1"/>
    <property type="molecule type" value="mRNA"/>
</dbReference>
<dbReference type="PIR" id="S02665">
    <property type="entry name" value="S02665"/>
</dbReference>
<dbReference type="SMR" id="P20305"/>
<dbReference type="FunCoup" id="P20305">
    <property type="interactions" value="138"/>
</dbReference>
<dbReference type="STRING" id="9823.ENSSSCP00000039436"/>
<dbReference type="PeptideAtlas" id="P20305"/>
<dbReference type="Ensembl" id="ENSSSCT00035110269.1">
    <molecule id="P20305-2"/>
    <property type="protein sequence ID" value="ENSSSCP00035048068.1"/>
    <property type="gene ID" value="ENSSSCG00035079388.1"/>
</dbReference>
<dbReference type="Ensembl" id="ENSSSCT00035110331.1">
    <molecule id="P20305-2"/>
    <property type="protein sequence ID" value="ENSSSCP00035048108.1"/>
    <property type="gene ID" value="ENSSSCG00035079388.1"/>
</dbReference>
<dbReference type="Ensembl" id="ENSSSCT00065004313.1">
    <molecule id="P20305-2"/>
    <property type="protein sequence ID" value="ENSSSCP00065001769.1"/>
    <property type="gene ID" value="ENSSSCG00065003179.1"/>
</dbReference>
<dbReference type="InParanoid" id="P20305"/>
<dbReference type="Reactome" id="R-SSC-264870">
    <property type="pathway name" value="Caspase-mediated cleavage of cytoskeletal proteins"/>
</dbReference>
<dbReference type="Reactome" id="R-SSC-6798695">
    <property type="pathway name" value="Neutrophil degranulation"/>
</dbReference>
<dbReference type="Proteomes" id="UP000008227">
    <property type="component" value="Unplaced"/>
</dbReference>
<dbReference type="Proteomes" id="UP000314985">
    <property type="component" value="Unplaced"/>
</dbReference>
<dbReference type="Proteomes" id="UP000694570">
    <property type="component" value="Unplaced"/>
</dbReference>
<dbReference type="Proteomes" id="UP000694571">
    <property type="component" value="Unplaced"/>
</dbReference>
<dbReference type="Proteomes" id="UP000694720">
    <property type="component" value="Unplaced"/>
</dbReference>
<dbReference type="Proteomes" id="UP000694722">
    <property type="component" value="Unplaced"/>
</dbReference>
<dbReference type="Proteomes" id="UP000694723">
    <property type="component" value="Unplaced"/>
</dbReference>
<dbReference type="Proteomes" id="UP000694724">
    <property type="component" value="Unplaced"/>
</dbReference>
<dbReference type="Proteomes" id="UP000694725">
    <property type="component" value="Unplaced"/>
</dbReference>
<dbReference type="Proteomes" id="UP000694726">
    <property type="component" value="Unplaced"/>
</dbReference>
<dbReference type="Proteomes" id="UP000694727">
    <property type="component" value="Unplaced"/>
</dbReference>
<dbReference type="Proteomes" id="UP000694728">
    <property type="component" value="Unplaced"/>
</dbReference>
<dbReference type="GO" id="GO:0015629">
    <property type="term" value="C:actin cytoskeleton"/>
    <property type="evidence" value="ECO:0000318"/>
    <property type="project" value="GO_Central"/>
</dbReference>
<dbReference type="GO" id="GO:0005737">
    <property type="term" value="C:cytoplasm"/>
    <property type="evidence" value="ECO:0000318"/>
    <property type="project" value="GO_Central"/>
</dbReference>
<dbReference type="GO" id="GO:0005829">
    <property type="term" value="C:cytosol"/>
    <property type="evidence" value="ECO:0000314"/>
    <property type="project" value="UniProtKB"/>
</dbReference>
<dbReference type="GO" id="GO:0005576">
    <property type="term" value="C:extracellular region"/>
    <property type="evidence" value="ECO:0000314"/>
    <property type="project" value="UniProtKB"/>
</dbReference>
<dbReference type="GO" id="GO:0005615">
    <property type="term" value="C:extracellular space"/>
    <property type="evidence" value="ECO:0000318"/>
    <property type="project" value="GO_Central"/>
</dbReference>
<dbReference type="GO" id="GO:0051015">
    <property type="term" value="F:actin filament binding"/>
    <property type="evidence" value="ECO:0000318"/>
    <property type="project" value="GO_Central"/>
</dbReference>
<dbReference type="GO" id="GO:0046872">
    <property type="term" value="F:metal ion binding"/>
    <property type="evidence" value="ECO:0007669"/>
    <property type="project" value="UniProtKB-KW"/>
</dbReference>
<dbReference type="GO" id="GO:0005546">
    <property type="term" value="F:phosphatidylinositol-4,5-bisphosphate binding"/>
    <property type="evidence" value="ECO:0000318"/>
    <property type="project" value="GO_Central"/>
</dbReference>
<dbReference type="GO" id="GO:0030042">
    <property type="term" value="P:actin filament depolymerization"/>
    <property type="evidence" value="ECO:0000314"/>
    <property type="project" value="BHF-UCL"/>
</dbReference>
<dbReference type="GO" id="GO:0030041">
    <property type="term" value="P:actin filament polymerization"/>
    <property type="evidence" value="ECO:0000250"/>
    <property type="project" value="UniProtKB"/>
</dbReference>
<dbReference type="GO" id="GO:0051014">
    <property type="term" value="P:actin filament severing"/>
    <property type="evidence" value="ECO:0000250"/>
    <property type="project" value="UniProtKB"/>
</dbReference>
<dbReference type="GO" id="GO:0008154">
    <property type="term" value="P:actin polymerization or depolymerization"/>
    <property type="evidence" value="ECO:0000318"/>
    <property type="project" value="GO_Central"/>
</dbReference>
<dbReference type="GO" id="GO:0051016">
    <property type="term" value="P:barbed-end actin filament capping"/>
    <property type="evidence" value="ECO:0000318"/>
    <property type="project" value="GO_Central"/>
</dbReference>
<dbReference type="GO" id="GO:0030031">
    <property type="term" value="P:cell projection assembly"/>
    <property type="evidence" value="ECO:0000318"/>
    <property type="project" value="GO_Central"/>
</dbReference>
<dbReference type="GO" id="GO:0007417">
    <property type="term" value="P:central nervous system development"/>
    <property type="evidence" value="ECO:0000318"/>
    <property type="project" value="GO_Central"/>
</dbReference>
<dbReference type="GO" id="GO:0060271">
    <property type="term" value="P:cilium assembly"/>
    <property type="evidence" value="ECO:0000250"/>
    <property type="project" value="UniProtKB"/>
</dbReference>
<dbReference type="CDD" id="cd11290">
    <property type="entry name" value="gelsolin_S1_like"/>
    <property type="match status" value="1"/>
</dbReference>
<dbReference type="CDD" id="cd11289">
    <property type="entry name" value="gelsolin_S2_like"/>
    <property type="match status" value="1"/>
</dbReference>
<dbReference type="CDD" id="cd11292">
    <property type="entry name" value="gelsolin_S3_like"/>
    <property type="match status" value="1"/>
</dbReference>
<dbReference type="CDD" id="cd11293">
    <property type="entry name" value="gelsolin_S4_like"/>
    <property type="match status" value="1"/>
</dbReference>
<dbReference type="CDD" id="cd11288">
    <property type="entry name" value="gelsolin_S5_like"/>
    <property type="match status" value="1"/>
</dbReference>
<dbReference type="CDD" id="cd11291">
    <property type="entry name" value="gelsolin_S6_like"/>
    <property type="match status" value="1"/>
</dbReference>
<dbReference type="FunFam" id="3.40.20.10:FF:000001">
    <property type="entry name" value="Gelsolin"/>
    <property type="match status" value="1"/>
</dbReference>
<dbReference type="FunFam" id="3.40.20.10:FF:000002">
    <property type="entry name" value="Gelsolin"/>
    <property type="match status" value="1"/>
</dbReference>
<dbReference type="FunFam" id="3.40.20.10:FF:000004">
    <property type="entry name" value="Gelsolin"/>
    <property type="match status" value="1"/>
</dbReference>
<dbReference type="FunFam" id="3.40.20.10:FF:000005">
    <property type="entry name" value="Gelsolin"/>
    <property type="match status" value="1"/>
</dbReference>
<dbReference type="FunFam" id="3.40.20.10:FF:000009">
    <property type="entry name" value="gelsolin isoform X1"/>
    <property type="match status" value="1"/>
</dbReference>
<dbReference type="FunFam" id="3.40.20.10:FF:000008">
    <property type="entry name" value="gelsolin isoform X2"/>
    <property type="match status" value="1"/>
</dbReference>
<dbReference type="Gene3D" id="3.40.20.10">
    <property type="entry name" value="Severin"/>
    <property type="match status" value="6"/>
</dbReference>
<dbReference type="InterPro" id="IPR029006">
    <property type="entry name" value="ADF-H/Gelsolin-like_dom_sf"/>
</dbReference>
<dbReference type="InterPro" id="IPR007123">
    <property type="entry name" value="Gelsolin-like_dom"/>
</dbReference>
<dbReference type="InterPro" id="IPR007122">
    <property type="entry name" value="Villin/Gelsolin"/>
</dbReference>
<dbReference type="PANTHER" id="PTHR11977:SF29">
    <property type="entry name" value="GELSOLIN"/>
    <property type="match status" value="1"/>
</dbReference>
<dbReference type="PANTHER" id="PTHR11977">
    <property type="entry name" value="VILLIN"/>
    <property type="match status" value="1"/>
</dbReference>
<dbReference type="Pfam" id="PF00626">
    <property type="entry name" value="Gelsolin"/>
    <property type="match status" value="6"/>
</dbReference>
<dbReference type="PRINTS" id="PR00597">
    <property type="entry name" value="GELSOLIN"/>
</dbReference>
<dbReference type="SMART" id="SM00262">
    <property type="entry name" value="GEL"/>
    <property type="match status" value="6"/>
</dbReference>
<dbReference type="SUPFAM" id="SSF55753">
    <property type="entry name" value="Actin depolymerizing proteins"/>
    <property type="match status" value="6"/>
</dbReference>
<name>GELS_PIG</name>
<gene>
    <name type="primary">GSN</name>
</gene>
<comment type="function">
    <text evidence="2">Calcium-regulated, actin-modulating protein that binds to the plus (or barbed) ends of actin monomers or filaments, preventing monomer exchange (end-blocking or capping). It can promote the assembly of monomers into filaments (nucleation) as well as sever filaments already formed (By similarity). Plays a role in ciliogenesis (By similarity).</text>
</comment>
<comment type="subunit">
    <text evidence="1 3">Binds to actin and to fibronectin. Identified in a complex composed of ACTA1, COBL, GSN and TMSB4X (By similarity). Interacts with the inactive form of EIF2AK2/PKR (By similarity). Interacts with FLII (By similarity).</text>
</comment>
<comment type="subcellular location">
    <molecule>Isoform 2</molecule>
    <subcellularLocation>
        <location>Cytoplasm</location>
        <location>Cytoskeleton</location>
    </subcellularLocation>
</comment>
<comment type="subcellular location">
    <molecule>Isoform 1</molecule>
    <subcellularLocation>
        <location>Secreted</location>
    </subcellularLocation>
</comment>
<comment type="alternative products">
    <event type="alternative initiation"/>
    <isoform>
        <id>P20305-1</id>
        <name>1</name>
        <name>Secreted</name>
        <name>Plasma</name>
        <sequence type="displayed"/>
    </isoform>
    <isoform>
        <id>P20305-2</id>
        <name>2</name>
        <name>Cytoplasmic</name>
        <sequence type="described" ref="VSP_018961"/>
    </isoform>
</comment>
<comment type="domain">
    <text evidence="2">Comprises six structurally related gelsolin-like (G1-G6) domains, that, in a calcium-free environment, are packed together to form a compact globular structure in which the putative actin-binding sequences are not sufficiently exposed to enable binding to occur. Binding calcium may release the connections that join the N- and C-terminal halves of gelsolin, enabling each half to bind actin relatively independently. G1 and G4 bind two Ca(2+) in a type I and in a type II manner. G2, G3, G5 and G6 bind only one Ca(2+) in a type II manner. Type I Ca(2+) binding sites are shared between actin and gelsolin-like repeats G1 and G4. Type I binding governs the strength of interactions between gelsolin and actin by direct participation at the binding interface. Ca(2+) binding to G2 and G6 disrupts the interactions between G2 and G6, releases the C-terminal tail, and induces large interdomain rearrangements that result in the exposure of the F-actin-binding site on G2 and contributes to the activation of gelsolin. Binding to phosphoinositides may inhibit the severing and capping properties of gelsolin.</text>
</comment>
<comment type="PTM">
    <text evidence="1">Phosphorylated on tyrosine residues in vitro.</text>
</comment>
<comment type="similarity">
    <text evidence="7">Belongs to the villin/gelsolin family.</text>
</comment>
<protein>
    <recommendedName>
        <fullName>Gelsolin</fullName>
    </recommendedName>
    <alternativeName>
        <fullName>Actin-depolymerizing factor</fullName>
        <shortName>ADF</shortName>
    </alternativeName>
    <alternativeName>
        <fullName>Brevin</fullName>
    </alternativeName>
</protein>
<feature type="signal peptide" evidence="4">
    <location>
        <begin position="1" status="less than"/>
        <end position="17"/>
    </location>
</feature>
<feature type="propeptide" id="PRO_0000036389" evidence="6">
    <location>
        <begin position="18"/>
        <end position="33"/>
    </location>
</feature>
<feature type="chain" id="PRO_0000036390" description="Gelsolin">
    <location>
        <begin position="34"/>
        <end position="772"/>
    </location>
</feature>
<feature type="repeat" description="Gelsolin-like 1" evidence="4">
    <location>
        <begin position="66"/>
        <end position="148"/>
    </location>
</feature>
<feature type="repeat" description="Gelsolin-like 2" evidence="4">
    <location>
        <begin position="188"/>
        <end position="260"/>
    </location>
</feature>
<feature type="repeat" description="Gelsolin-like 3" evidence="4">
    <location>
        <begin position="307"/>
        <end position="379"/>
    </location>
</feature>
<feature type="repeat" description="Gelsolin-like 4" evidence="4">
    <location>
        <begin position="445"/>
        <end position="526"/>
    </location>
</feature>
<feature type="repeat" description="Gelsolin-like 5" evidence="4">
    <location>
        <begin position="567"/>
        <end position="632"/>
    </location>
</feature>
<feature type="repeat" description="Gelsolin-like 6" evidence="4">
    <location>
        <begin position="671"/>
        <end position="746"/>
    </location>
</feature>
<feature type="region of interest" description="Disordered" evidence="5">
    <location>
        <begin position="19"/>
        <end position="38"/>
    </location>
</feature>
<feature type="region of interest" description="Actin-severing" evidence="4">
    <location>
        <begin position="41"/>
        <end position="166"/>
    </location>
</feature>
<feature type="region of interest" description="Actin-actin interfilament contact point">
    <location>
        <begin position="113"/>
        <end position="116"/>
    </location>
</feature>
<feature type="region of interest" description="Actin-binding, Ca-sensitive" evidence="4">
    <location>
        <begin position="424"/>
        <end position="772"/>
    </location>
</feature>
<feature type="binding site" evidence="2">
    <location>
        <position position="82"/>
    </location>
    <ligand>
        <name>Ca(2+)</name>
        <dbReference type="ChEBI" id="CHEBI:29108"/>
        <label>1</label>
        <note>type II</note>
    </ligand>
</feature>
<feature type="binding site" evidence="2">
    <location>
        <position position="83"/>
    </location>
    <ligand>
        <name>Ca(2+)</name>
        <dbReference type="ChEBI" id="CHEBI:29108"/>
        <label>1</label>
        <note>type II</note>
    </ligand>
</feature>
<feature type="binding site" evidence="2">
    <location>
        <position position="114"/>
    </location>
    <ligand>
        <name>Ca(2+)</name>
        <dbReference type="ChEBI" id="CHEBI:29108"/>
        <label>1</label>
        <note>type II</note>
    </ligand>
</feature>
<feature type="binding site" evidence="2">
    <location>
        <position position="126"/>
    </location>
    <ligand>
        <name>Ca(2+)</name>
        <dbReference type="ChEBI" id="CHEBI:29108"/>
        <label>2</label>
        <note>type I</note>
    </ligand>
</feature>
<feature type="binding site" evidence="2">
    <location>
        <position position="131"/>
    </location>
    <ligand>
        <name>Ca(2+)</name>
        <dbReference type="ChEBI" id="CHEBI:29108"/>
        <label>2</label>
        <note>type I</note>
    </ligand>
</feature>
<feature type="binding site" evidence="2">
    <location>
        <position position="133"/>
    </location>
    <ligand>
        <name>Ca(2+)</name>
        <dbReference type="ChEBI" id="CHEBI:29108"/>
        <label>2</label>
        <note>type I</note>
    </ligand>
</feature>
<feature type="binding site" evidence="1">
    <location>
        <begin position="152"/>
        <end position="159"/>
    </location>
    <ligand>
        <name>a 1,2-diacyl-sn-glycero-3-phospho-(1D-myo-inositol-4,5-bisphosphate)</name>
        <dbReference type="ChEBI" id="CHEBI:58456"/>
    </ligand>
</feature>
<feature type="binding site" evidence="2">
    <location>
        <position position="162"/>
    </location>
    <ligand>
        <name>Ca(2+)</name>
        <dbReference type="ChEBI" id="CHEBI:29108"/>
        <label>1</label>
        <note>type II</note>
    </ligand>
</feature>
<feature type="binding site" evidence="1">
    <location>
        <begin position="178"/>
        <end position="186"/>
    </location>
    <ligand>
        <name>a 1,2-diacyl-sn-glycero-3-phospho-(1D-myo-inositol-4,5-bisphosphate)</name>
        <dbReference type="ChEBI" id="CHEBI:58456"/>
    </ligand>
</feature>
<feature type="binding site" evidence="2">
    <location>
        <position position="203"/>
    </location>
    <ligand>
        <name>Ca(2+)</name>
        <dbReference type="ChEBI" id="CHEBI:29108"/>
        <label>3</label>
        <note>type II</note>
    </ligand>
</feature>
<feature type="binding site" evidence="2">
    <location>
        <position position="204"/>
    </location>
    <ligand>
        <name>Ca(2+)</name>
        <dbReference type="ChEBI" id="CHEBI:29108"/>
        <label>3</label>
        <note>type II</note>
    </ligand>
</feature>
<feature type="binding site" evidence="2">
    <location>
        <position position="226"/>
    </location>
    <ligand>
        <name>Ca(2+)</name>
        <dbReference type="ChEBI" id="CHEBI:29108"/>
        <label>3</label>
        <note>type II</note>
    </ligand>
</feature>
<feature type="binding site" evidence="2">
    <location>
        <position position="276"/>
    </location>
    <ligand>
        <name>Ca(2+)</name>
        <dbReference type="ChEBI" id="CHEBI:29108"/>
        <label>3</label>
        <note>type II</note>
    </ligand>
</feature>
<feature type="binding site" evidence="2">
    <location>
        <position position="319"/>
    </location>
    <ligand>
        <name>Ca(2+)</name>
        <dbReference type="ChEBI" id="CHEBI:29108"/>
        <label>4</label>
        <note>type II</note>
    </ligand>
</feature>
<feature type="binding site" evidence="2">
    <location>
        <position position="320"/>
    </location>
    <ligand>
        <name>Ca(2+)</name>
        <dbReference type="ChEBI" id="CHEBI:29108"/>
        <label>4</label>
        <note>type II</note>
    </ligand>
</feature>
<feature type="binding site" evidence="2">
    <location>
        <position position="344"/>
    </location>
    <ligand>
        <name>Ca(2+)</name>
        <dbReference type="ChEBI" id="CHEBI:29108"/>
        <label>4</label>
        <note>type II</note>
    </ligand>
</feature>
<feature type="binding site" evidence="2">
    <location>
        <position position="461"/>
    </location>
    <ligand>
        <name>Ca(2+)</name>
        <dbReference type="ChEBI" id="CHEBI:29108"/>
        <label>5</label>
        <note>type II</note>
    </ligand>
</feature>
<feature type="binding site" evidence="2">
    <location>
        <position position="462"/>
    </location>
    <ligand>
        <name>Ca(2+)</name>
        <dbReference type="ChEBI" id="CHEBI:29108"/>
        <label>5</label>
        <note>type II</note>
    </ligand>
</feature>
<feature type="binding site" evidence="2">
    <location>
        <position position="492"/>
    </location>
    <ligand>
        <name>Ca(2+)</name>
        <dbReference type="ChEBI" id="CHEBI:29108"/>
        <label>5</label>
        <note>type II</note>
    </ligand>
</feature>
<feature type="binding site" evidence="2">
    <location>
        <position position="504"/>
    </location>
    <ligand>
        <name>Ca(2+)</name>
        <dbReference type="ChEBI" id="CHEBI:29108"/>
        <label>6</label>
        <note>type I</note>
    </ligand>
</feature>
<feature type="binding site" evidence="2">
    <location>
        <position position="509"/>
    </location>
    <ligand>
        <name>Ca(2+)</name>
        <dbReference type="ChEBI" id="CHEBI:29108"/>
        <label>6</label>
        <note>type I</note>
    </ligand>
</feature>
<feature type="binding site" evidence="2">
    <location>
        <position position="511"/>
    </location>
    <ligand>
        <name>Ca(2+)</name>
        <dbReference type="ChEBI" id="CHEBI:29108"/>
        <label>6</label>
        <note>type I</note>
    </ligand>
</feature>
<feature type="binding site" evidence="2">
    <location>
        <position position="541"/>
    </location>
    <ligand>
        <name>Ca(2+)</name>
        <dbReference type="ChEBI" id="CHEBI:29108"/>
        <label>5</label>
        <note>type II</note>
    </ligand>
</feature>
<feature type="binding site" evidence="2">
    <location>
        <position position="581"/>
    </location>
    <ligand>
        <name>Ca(2+)</name>
        <dbReference type="ChEBI" id="CHEBI:29108"/>
        <label>7</label>
        <note>type II</note>
    </ligand>
</feature>
<feature type="binding site" evidence="2">
    <location>
        <position position="582"/>
    </location>
    <ligand>
        <name>Ca(2+)</name>
        <dbReference type="ChEBI" id="CHEBI:29108"/>
        <label>7</label>
        <note>type II</note>
    </ligand>
</feature>
<feature type="binding site" evidence="2">
    <location>
        <position position="604"/>
    </location>
    <ligand>
        <name>Ca(2+)</name>
        <dbReference type="ChEBI" id="CHEBI:29108"/>
        <label>7</label>
        <note>type II</note>
    </ligand>
</feature>
<feature type="binding site" evidence="2">
    <location>
        <position position="686"/>
    </location>
    <ligand>
        <name>Ca(2+)</name>
        <dbReference type="ChEBI" id="CHEBI:29108"/>
        <label>8</label>
        <note>type II</note>
    </ligand>
</feature>
<feature type="binding site" evidence="2">
    <location>
        <position position="687"/>
    </location>
    <ligand>
        <name>Ca(2+)</name>
        <dbReference type="ChEBI" id="CHEBI:29108"/>
        <label>8</label>
        <note>type II</note>
    </ligand>
</feature>
<feature type="binding site" evidence="2">
    <location>
        <position position="709"/>
    </location>
    <ligand>
        <name>Ca(2+)</name>
        <dbReference type="ChEBI" id="CHEBI:29108"/>
        <label>8</label>
        <note>type II</note>
    </ligand>
</feature>
<feature type="modified residue" description="Phosphotyrosine" evidence="2">
    <location>
        <position position="76"/>
    </location>
</feature>
<feature type="modified residue" description="Phosphotyrosine" evidence="2">
    <location>
        <position position="399"/>
    </location>
</feature>
<feature type="modified residue" description="Phosphotyrosine" evidence="2">
    <location>
        <position position="455"/>
    </location>
</feature>
<feature type="modified residue" description="N6-acetyllysine" evidence="3">
    <location>
        <position position="574"/>
    </location>
</feature>
<feature type="modified residue" description="Phosphotyrosine" evidence="2">
    <location>
        <position position="593"/>
    </location>
</feature>
<feature type="modified residue" description="Phosphotyrosine" evidence="2">
    <location>
        <position position="641"/>
    </location>
</feature>
<feature type="modified residue" description="Phosphothreonine" evidence="2">
    <location>
        <position position="732"/>
    </location>
</feature>
<feature type="disulfide bond" description="In isoform 1" evidence="2">
    <location>
        <begin position="205"/>
        <end position="218"/>
    </location>
</feature>
<feature type="splice variant" id="VSP_018961" description="In isoform 2." evidence="7">
    <location>
        <begin position="1" status="less than"/>
        <end position="41"/>
    </location>
</feature>
<feature type="sequence conflict" description="In Ref. 2; AA sequence." evidence="7" ref="2">
    <original>R</original>
    <variation>S</variation>
    <location>
        <position position="38"/>
    </location>
</feature>
<feature type="non-terminal residue">
    <location>
        <position position="1"/>
    </location>
</feature>
<sequence>LGALVVALCALSPPARAATASRGAPQARAPQGRVSPMRPSTMVVEHPEFLKAGKEPGLQIWRVEKFDLVPVPPNLYGDFFTGDAYVILKTVQLRNGNLQYDLHYWLGNECSQDESGAAAIFTVQLDDYLNGRAVQHREVQGFESATFLGYFKSGLKYKKGGVASGFKHVVPNEVAVQRLFQVKGRRVVRATEVPVSWESFNRGDCFILDLGNDIYQWCGSNSNRYERLKATQVSKGIRDNERSGRAHVHVSEEDAEPAGMLQVLGPKPTLPEGTEDTVKEDAANRKLAKLYKVSNGAGTMTVSLVADENPFAQGALKSEDCFILDHGKDGKIFVWKGKQANTEERKAALKTASDFISKMNYPKQTQVSVLPEGGETPLFKQFFKNWRDPDQVDGPGLSYLSSHIANVERVPFDAATLHTSTAMAAQHGMDDDGTGQKQIWRIEGSNKVPVDPATYGQFYGGDSYIILYNYRHGGRQGQIIYNWQGAQSTQDEVAASAILTAQLDEELGGTPVQSRVVQGKEPAHLMSLFGGKPMIIYRGGTSREGGQTAPASTRLFQVRASSSGATRAVEVIPKAGALNSNDAFVLKTPSAAYLWVGTGASEAEKTGAQELLRVLRAQPVQVAEGSEPDSFWEALGGKAAYRTSPRLKDKKMDAHPPRLFACSNKIGRFVVEEVPGELMQEDLATDDVMLLDTWDQVFVWVGKDSQEEEKTEALTSAKRYIETDPANRDRRTPINVVKQGFEPPSFVGWFLGWDDNYWSVDPLDRAIAELAA</sequence>
<proteinExistence type="evidence at protein level"/>
<evidence type="ECO:0000250" key="1"/>
<evidence type="ECO:0000250" key="2">
    <source>
        <dbReference type="UniProtKB" id="P06396"/>
    </source>
</evidence>
<evidence type="ECO:0000250" key="3">
    <source>
        <dbReference type="UniProtKB" id="P13020"/>
    </source>
</evidence>
<evidence type="ECO:0000255" key="4"/>
<evidence type="ECO:0000256" key="5">
    <source>
        <dbReference type="SAM" id="MobiDB-lite"/>
    </source>
</evidence>
<evidence type="ECO:0000269" key="6">
    <source>
    </source>
</evidence>
<evidence type="ECO:0000305" key="7"/>
<accession>P20305</accession>